<evidence type="ECO:0000255" key="1">
    <source>
        <dbReference type="HAMAP-Rule" id="MF_00170"/>
    </source>
</evidence>
<reference key="1">
    <citation type="journal article" date="2010" name="Genome Biol. Evol.">
        <title>Continuing evolution of Burkholderia mallei through genome reduction and large-scale rearrangements.</title>
        <authorList>
            <person name="Losada L."/>
            <person name="Ronning C.M."/>
            <person name="DeShazer D."/>
            <person name="Woods D."/>
            <person name="Fedorova N."/>
            <person name="Kim H.S."/>
            <person name="Shabalina S.A."/>
            <person name="Pearson T.R."/>
            <person name="Brinkac L."/>
            <person name="Tan P."/>
            <person name="Nandi T."/>
            <person name="Crabtree J."/>
            <person name="Badger J."/>
            <person name="Beckstrom-Sternberg S."/>
            <person name="Saqib M."/>
            <person name="Schutzer S.E."/>
            <person name="Keim P."/>
            <person name="Nierman W.C."/>
        </authorList>
    </citation>
    <scope>NUCLEOTIDE SEQUENCE [LARGE SCALE GENOMIC DNA]</scope>
    <source>
        <strain>SAVP1</strain>
    </source>
</reference>
<protein>
    <recommendedName>
        <fullName evidence="1">Ribose-5-phosphate isomerase A</fullName>
        <ecNumber evidence="1">5.3.1.6</ecNumber>
    </recommendedName>
    <alternativeName>
        <fullName evidence="1">Phosphoriboisomerase A</fullName>
        <shortName evidence="1">PRI</shortName>
    </alternativeName>
</protein>
<sequence length="231" mass="24203">MTQDELKRLVGEAAARYVTENVPQGAVIGVGTGSTANCFIDALAAVKDRYRGAVSSSVATTERLKSHGIKVFDLNEIESLQVYVDGADEIDGSGAMIKGGGGALTREKIVASVAETFVCIADASKRVAVLGQFPLPVEVVPMARTAIGRRLAALGGVPVLRVKQDGAPYVTDNGNEILDVKGLRIDDPRALEAAINGWPGVVTVGLFAQRGADLCLLGTERGVETLRYAAH</sequence>
<dbReference type="EC" id="5.3.1.6" evidence="1"/>
<dbReference type="EMBL" id="CP000526">
    <property type="protein sequence ID" value="ABM49708.1"/>
    <property type="molecule type" value="Genomic_DNA"/>
</dbReference>
<dbReference type="RefSeq" id="WP_004192848.1">
    <property type="nucleotide sequence ID" value="NC_008785.1"/>
</dbReference>
<dbReference type="SMR" id="A1V4B2"/>
<dbReference type="GeneID" id="93060124"/>
<dbReference type="KEGG" id="bmv:BMASAVP1_A1743"/>
<dbReference type="HOGENOM" id="CLU_056590_1_1_4"/>
<dbReference type="UniPathway" id="UPA00115">
    <property type="reaction ID" value="UER00412"/>
</dbReference>
<dbReference type="GO" id="GO:0005829">
    <property type="term" value="C:cytosol"/>
    <property type="evidence" value="ECO:0007669"/>
    <property type="project" value="TreeGrafter"/>
</dbReference>
<dbReference type="GO" id="GO:0004751">
    <property type="term" value="F:ribose-5-phosphate isomerase activity"/>
    <property type="evidence" value="ECO:0007669"/>
    <property type="project" value="UniProtKB-UniRule"/>
</dbReference>
<dbReference type="GO" id="GO:0006014">
    <property type="term" value="P:D-ribose metabolic process"/>
    <property type="evidence" value="ECO:0007669"/>
    <property type="project" value="TreeGrafter"/>
</dbReference>
<dbReference type="GO" id="GO:0009052">
    <property type="term" value="P:pentose-phosphate shunt, non-oxidative branch"/>
    <property type="evidence" value="ECO:0007669"/>
    <property type="project" value="UniProtKB-UniRule"/>
</dbReference>
<dbReference type="CDD" id="cd01398">
    <property type="entry name" value="RPI_A"/>
    <property type="match status" value="1"/>
</dbReference>
<dbReference type="FunFam" id="3.40.50.1360:FF:000001">
    <property type="entry name" value="Ribose-5-phosphate isomerase A"/>
    <property type="match status" value="1"/>
</dbReference>
<dbReference type="Gene3D" id="3.30.70.260">
    <property type="match status" value="1"/>
</dbReference>
<dbReference type="Gene3D" id="3.40.50.1360">
    <property type="match status" value="1"/>
</dbReference>
<dbReference type="HAMAP" id="MF_00170">
    <property type="entry name" value="Rib_5P_isom_A"/>
    <property type="match status" value="1"/>
</dbReference>
<dbReference type="InterPro" id="IPR037171">
    <property type="entry name" value="NagB/RpiA_transferase-like"/>
</dbReference>
<dbReference type="InterPro" id="IPR020672">
    <property type="entry name" value="Ribose5P_isomerase_typA_subgr"/>
</dbReference>
<dbReference type="InterPro" id="IPR004788">
    <property type="entry name" value="Ribose5P_isomerase_type_A"/>
</dbReference>
<dbReference type="NCBIfam" id="NF001924">
    <property type="entry name" value="PRK00702.1"/>
    <property type="match status" value="1"/>
</dbReference>
<dbReference type="NCBIfam" id="TIGR00021">
    <property type="entry name" value="rpiA"/>
    <property type="match status" value="1"/>
</dbReference>
<dbReference type="PANTHER" id="PTHR11934">
    <property type="entry name" value="RIBOSE-5-PHOSPHATE ISOMERASE"/>
    <property type="match status" value="1"/>
</dbReference>
<dbReference type="PANTHER" id="PTHR11934:SF0">
    <property type="entry name" value="RIBOSE-5-PHOSPHATE ISOMERASE"/>
    <property type="match status" value="1"/>
</dbReference>
<dbReference type="Pfam" id="PF06026">
    <property type="entry name" value="Rib_5-P_isom_A"/>
    <property type="match status" value="1"/>
</dbReference>
<dbReference type="SUPFAM" id="SSF75445">
    <property type="entry name" value="D-ribose-5-phosphate isomerase (RpiA), lid domain"/>
    <property type="match status" value="1"/>
</dbReference>
<dbReference type="SUPFAM" id="SSF100950">
    <property type="entry name" value="NagB/RpiA/CoA transferase-like"/>
    <property type="match status" value="1"/>
</dbReference>
<name>RPIA_BURMS</name>
<accession>A1V4B2</accession>
<proteinExistence type="inferred from homology"/>
<organism>
    <name type="scientific">Burkholderia mallei (strain SAVP1)</name>
    <dbReference type="NCBI Taxonomy" id="320388"/>
    <lineage>
        <taxon>Bacteria</taxon>
        <taxon>Pseudomonadati</taxon>
        <taxon>Pseudomonadota</taxon>
        <taxon>Betaproteobacteria</taxon>
        <taxon>Burkholderiales</taxon>
        <taxon>Burkholderiaceae</taxon>
        <taxon>Burkholderia</taxon>
        <taxon>pseudomallei group</taxon>
    </lineage>
</organism>
<gene>
    <name evidence="1" type="primary">rpiA</name>
    <name type="ordered locus">BMASAVP1_A1743</name>
</gene>
<feature type="chain" id="PRO_1000016911" description="Ribose-5-phosphate isomerase A">
    <location>
        <begin position="1"/>
        <end position="231"/>
    </location>
</feature>
<feature type="active site" description="Proton acceptor" evidence="1">
    <location>
        <position position="107"/>
    </location>
</feature>
<feature type="binding site" evidence="1">
    <location>
        <begin position="32"/>
        <end position="35"/>
    </location>
    <ligand>
        <name>substrate</name>
    </ligand>
</feature>
<feature type="binding site" evidence="1">
    <location>
        <begin position="85"/>
        <end position="88"/>
    </location>
    <ligand>
        <name>substrate</name>
    </ligand>
</feature>
<feature type="binding site" evidence="1">
    <location>
        <begin position="98"/>
        <end position="101"/>
    </location>
    <ligand>
        <name>substrate</name>
    </ligand>
</feature>
<feature type="binding site" evidence="1">
    <location>
        <position position="125"/>
    </location>
    <ligand>
        <name>substrate</name>
    </ligand>
</feature>
<comment type="function">
    <text evidence="1">Catalyzes the reversible conversion of ribose-5-phosphate to ribulose 5-phosphate.</text>
</comment>
<comment type="catalytic activity">
    <reaction evidence="1">
        <text>aldehydo-D-ribose 5-phosphate = D-ribulose 5-phosphate</text>
        <dbReference type="Rhea" id="RHEA:14657"/>
        <dbReference type="ChEBI" id="CHEBI:58121"/>
        <dbReference type="ChEBI" id="CHEBI:58273"/>
        <dbReference type="EC" id="5.3.1.6"/>
    </reaction>
</comment>
<comment type="pathway">
    <text evidence="1">Carbohydrate degradation; pentose phosphate pathway; D-ribose 5-phosphate from D-ribulose 5-phosphate (non-oxidative stage): step 1/1.</text>
</comment>
<comment type="subunit">
    <text evidence="1">Homodimer.</text>
</comment>
<comment type="similarity">
    <text evidence="1">Belongs to the ribose 5-phosphate isomerase family.</text>
</comment>
<keyword id="KW-0413">Isomerase</keyword>